<gene>
    <name evidence="1" type="primary">tig</name>
    <name type="ordered locus">NIS_0164</name>
</gene>
<reference key="1">
    <citation type="journal article" date="2007" name="Proc. Natl. Acad. Sci. U.S.A.">
        <title>Deep-sea vent epsilon-proteobacterial genomes provide insights into emergence of pathogens.</title>
        <authorList>
            <person name="Nakagawa S."/>
            <person name="Takaki Y."/>
            <person name="Shimamura S."/>
            <person name="Reysenbach A.-L."/>
            <person name="Takai K."/>
            <person name="Horikoshi K."/>
        </authorList>
    </citation>
    <scope>NUCLEOTIDE SEQUENCE [LARGE SCALE GENOMIC DNA]</scope>
    <source>
        <strain>SB155-2</strain>
    </source>
</reference>
<dbReference type="EC" id="5.2.1.8" evidence="1"/>
<dbReference type="EMBL" id="AP009178">
    <property type="protein sequence ID" value="BAF69279.1"/>
    <property type="molecule type" value="Genomic_DNA"/>
</dbReference>
<dbReference type="RefSeq" id="WP_012081542.1">
    <property type="nucleotide sequence ID" value="NC_009662.1"/>
</dbReference>
<dbReference type="SMR" id="A6Q1C0"/>
<dbReference type="FunCoup" id="A6Q1C0">
    <property type="interactions" value="554"/>
</dbReference>
<dbReference type="STRING" id="387092.NIS_0164"/>
<dbReference type="KEGG" id="nis:NIS_0164"/>
<dbReference type="eggNOG" id="COG0544">
    <property type="taxonomic scope" value="Bacteria"/>
</dbReference>
<dbReference type="HOGENOM" id="CLU_033058_2_2_7"/>
<dbReference type="InParanoid" id="A6Q1C0"/>
<dbReference type="OrthoDB" id="9767721at2"/>
<dbReference type="Proteomes" id="UP000001118">
    <property type="component" value="Chromosome"/>
</dbReference>
<dbReference type="GO" id="GO:0005737">
    <property type="term" value="C:cytoplasm"/>
    <property type="evidence" value="ECO:0007669"/>
    <property type="project" value="UniProtKB-SubCell"/>
</dbReference>
<dbReference type="GO" id="GO:0003755">
    <property type="term" value="F:peptidyl-prolyl cis-trans isomerase activity"/>
    <property type="evidence" value="ECO:0007669"/>
    <property type="project" value="UniProtKB-UniRule"/>
</dbReference>
<dbReference type="GO" id="GO:0051301">
    <property type="term" value="P:cell division"/>
    <property type="evidence" value="ECO:0007669"/>
    <property type="project" value="UniProtKB-KW"/>
</dbReference>
<dbReference type="GO" id="GO:0006457">
    <property type="term" value="P:protein folding"/>
    <property type="evidence" value="ECO:0007669"/>
    <property type="project" value="UniProtKB-UniRule"/>
</dbReference>
<dbReference type="GO" id="GO:0015031">
    <property type="term" value="P:protein transport"/>
    <property type="evidence" value="ECO:0007669"/>
    <property type="project" value="UniProtKB-UniRule"/>
</dbReference>
<dbReference type="FunFam" id="3.10.50.40:FF:000001">
    <property type="entry name" value="Trigger factor"/>
    <property type="match status" value="1"/>
</dbReference>
<dbReference type="Gene3D" id="3.10.50.40">
    <property type="match status" value="1"/>
</dbReference>
<dbReference type="Gene3D" id="3.30.70.1050">
    <property type="entry name" value="Trigger factor ribosome-binding domain"/>
    <property type="match status" value="1"/>
</dbReference>
<dbReference type="Gene3D" id="1.10.3120.10">
    <property type="entry name" value="Trigger factor, C-terminal domain"/>
    <property type="match status" value="1"/>
</dbReference>
<dbReference type="HAMAP" id="MF_00303">
    <property type="entry name" value="Trigger_factor_Tig"/>
    <property type="match status" value="1"/>
</dbReference>
<dbReference type="InterPro" id="IPR046357">
    <property type="entry name" value="PPIase_dom_sf"/>
</dbReference>
<dbReference type="InterPro" id="IPR001179">
    <property type="entry name" value="PPIase_FKBP_dom"/>
</dbReference>
<dbReference type="InterPro" id="IPR005215">
    <property type="entry name" value="Trig_fac"/>
</dbReference>
<dbReference type="InterPro" id="IPR008880">
    <property type="entry name" value="Trigger_fac_C"/>
</dbReference>
<dbReference type="InterPro" id="IPR037041">
    <property type="entry name" value="Trigger_fac_C_sf"/>
</dbReference>
<dbReference type="InterPro" id="IPR008881">
    <property type="entry name" value="Trigger_fac_ribosome-bd_bac"/>
</dbReference>
<dbReference type="InterPro" id="IPR036611">
    <property type="entry name" value="Trigger_fac_ribosome-bd_sf"/>
</dbReference>
<dbReference type="InterPro" id="IPR027304">
    <property type="entry name" value="Trigger_fact/SurA_dom_sf"/>
</dbReference>
<dbReference type="NCBIfam" id="TIGR00115">
    <property type="entry name" value="tig"/>
    <property type="match status" value="1"/>
</dbReference>
<dbReference type="Pfam" id="PF00254">
    <property type="entry name" value="FKBP_C"/>
    <property type="match status" value="1"/>
</dbReference>
<dbReference type="Pfam" id="PF05698">
    <property type="entry name" value="Trigger_C"/>
    <property type="match status" value="1"/>
</dbReference>
<dbReference type="Pfam" id="PF05697">
    <property type="entry name" value="Trigger_N"/>
    <property type="match status" value="1"/>
</dbReference>
<dbReference type="PIRSF" id="PIRSF003095">
    <property type="entry name" value="Trigger_factor"/>
    <property type="match status" value="1"/>
</dbReference>
<dbReference type="SUPFAM" id="SSF54534">
    <property type="entry name" value="FKBP-like"/>
    <property type="match status" value="1"/>
</dbReference>
<dbReference type="SUPFAM" id="SSF109998">
    <property type="entry name" value="Triger factor/SurA peptide-binding domain-like"/>
    <property type="match status" value="1"/>
</dbReference>
<dbReference type="SUPFAM" id="SSF102735">
    <property type="entry name" value="Trigger factor ribosome-binding domain"/>
    <property type="match status" value="1"/>
</dbReference>
<dbReference type="PROSITE" id="PS50059">
    <property type="entry name" value="FKBP_PPIASE"/>
    <property type="match status" value="1"/>
</dbReference>
<protein>
    <recommendedName>
        <fullName evidence="1">Trigger factor</fullName>
        <shortName evidence="1">TF</shortName>
        <ecNumber evidence="1">5.2.1.8</ecNumber>
    </recommendedName>
    <alternativeName>
        <fullName evidence="1">PPIase</fullName>
    </alternativeName>
</protein>
<keyword id="KW-0131">Cell cycle</keyword>
<keyword id="KW-0132">Cell division</keyword>
<keyword id="KW-0143">Chaperone</keyword>
<keyword id="KW-0963">Cytoplasm</keyword>
<keyword id="KW-0413">Isomerase</keyword>
<keyword id="KW-1185">Reference proteome</keyword>
<keyword id="KW-0697">Rotamase</keyword>
<feature type="chain" id="PRO_1000022720" description="Trigger factor">
    <location>
        <begin position="1"/>
        <end position="437"/>
    </location>
</feature>
<feature type="domain" description="PPIase FKBP-type" evidence="1">
    <location>
        <begin position="165"/>
        <end position="251"/>
    </location>
</feature>
<accession>A6Q1C0</accession>
<sequence length="437" mass="49764">MEINAQKLNEANATVEAKIAKQDVEKKEEKIAKELAKTMNIPGFRKGKVPPAVIKKRYGDKLAQDAEAELVREALDQALEELGIEKEAMLGEPRFAKYEKGEEVIEMVLEIGVRPNIDITGYEEVIPEYEEPQVSDEEVEKRIEELADAMAQFKEIEEDRPAKEGDLVVIDFKGTLEDGSEIEGGSAQNFELRLGSGQFIPGFEEQVEGMKKGETKTIEVTFPEDYPNKELAGKKANFEVTLHTIKEKEKINIDDELAKKMLQKEDATLDELKEEVRKQLKSEKLSKLYNEELKPKLVEALVEKFEFDLPKNIVDQEIDVQLNNKAAQMSEEEIKELRENKEKLEELRKEIEPEAQKSVKATFIVDALAKAEGINVADQEVVQTIYYEALQMGRNPQEILKAYEEQGLLPAIKMAMIEDRLLTHLLSKKNEKQEENA</sequence>
<name>TIG_NITSB</name>
<organism>
    <name type="scientific">Nitratiruptor sp. (strain SB155-2)</name>
    <dbReference type="NCBI Taxonomy" id="387092"/>
    <lineage>
        <taxon>Bacteria</taxon>
        <taxon>Pseudomonadati</taxon>
        <taxon>Campylobacterota</taxon>
        <taxon>Epsilonproteobacteria</taxon>
        <taxon>Nautiliales</taxon>
        <taxon>Nitratiruptoraceae</taxon>
        <taxon>Nitratiruptor</taxon>
    </lineage>
</organism>
<proteinExistence type="inferred from homology"/>
<comment type="function">
    <text evidence="1">Involved in protein export. Acts as a chaperone by maintaining the newly synthesized protein in an open conformation. Functions as a peptidyl-prolyl cis-trans isomerase.</text>
</comment>
<comment type="catalytic activity">
    <reaction evidence="1">
        <text>[protein]-peptidylproline (omega=180) = [protein]-peptidylproline (omega=0)</text>
        <dbReference type="Rhea" id="RHEA:16237"/>
        <dbReference type="Rhea" id="RHEA-COMP:10747"/>
        <dbReference type="Rhea" id="RHEA-COMP:10748"/>
        <dbReference type="ChEBI" id="CHEBI:83833"/>
        <dbReference type="ChEBI" id="CHEBI:83834"/>
        <dbReference type="EC" id="5.2.1.8"/>
    </reaction>
</comment>
<comment type="subcellular location">
    <subcellularLocation>
        <location>Cytoplasm</location>
    </subcellularLocation>
    <text evidence="1">About half TF is bound to the ribosome near the polypeptide exit tunnel while the other half is free in the cytoplasm.</text>
</comment>
<comment type="domain">
    <text evidence="1">Consists of 3 domains; the N-terminus binds the ribosome, the middle domain has PPIase activity, while the C-terminus has intrinsic chaperone activity on its own.</text>
</comment>
<comment type="similarity">
    <text evidence="1">Belongs to the FKBP-type PPIase family. Tig subfamily.</text>
</comment>
<evidence type="ECO:0000255" key="1">
    <source>
        <dbReference type="HAMAP-Rule" id="MF_00303"/>
    </source>
</evidence>